<organism>
    <name type="scientific">Clostridium botulinum (strain Alaska E43 / Type E3)</name>
    <dbReference type="NCBI Taxonomy" id="508767"/>
    <lineage>
        <taxon>Bacteria</taxon>
        <taxon>Bacillati</taxon>
        <taxon>Bacillota</taxon>
        <taxon>Clostridia</taxon>
        <taxon>Eubacteriales</taxon>
        <taxon>Clostridiaceae</taxon>
        <taxon>Clostridium</taxon>
    </lineage>
</organism>
<sequence length="221" mass="24071">MNNAEILKHVDHTLLKPVATWDDIKKICDESIEYNTASICIPACYISRIHETYGDKINICTVVGFPLGYSSTEGKIAETKQALADGANEIDMVINISDVKNKAYDKVTEEIRALKEVVGNKILKVIIETCYLTEEEKIAMCKAVTEAGADYIKTSTGFGTGGATLEDIKLFKKHIGPNVKIKAAGGVSTVEDLNMFINEGCDRLGTSRAVGLLKGEETQGY</sequence>
<keyword id="KW-0963">Cytoplasm</keyword>
<keyword id="KW-0456">Lyase</keyword>
<keyword id="KW-0704">Schiff base</keyword>
<accession>B2V184</accession>
<gene>
    <name evidence="1" type="primary">deoC</name>
    <name type="ordered locus">CLH_0702</name>
</gene>
<evidence type="ECO:0000255" key="1">
    <source>
        <dbReference type="HAMAP-Rule" id="MF_00114"/>
    </source>
</evidence>
<dbReference type="EC" id="4.1.2.4" evidence="1"/>
<dbReference type="EMBL" id="CP001078">
    <property type="protein sequence ID" value="ACD52720.1"/>
    <property type="molecule type" value="Genomic_DNA"/>
</dbReference>
<dbReference type="RefSeq" id="WP_012450800.1">
    <property type="nucleotide sequence ID" value="NC_010723.1"/>
</dbReference>
<dbReference type="SMR" id="B2V184"/>
<dbReference type="KEGG" id="cbt:CLH_0702"/>
<dbReference type="HOGENOM" id="CLU_053595_0_1_9"/>
<dbReference type="UniPathway" id="UPA00002">
    <property type="reaction ID" value="UER00468"/>
</dbReference>
<dbReference type="GO" id="GO:0005737">
    <property type="term" value="C:cytoplasm"/>
    <property type="evidence" value="ECO:0007669"/>
    <property type="project" value="UniProtKB-SubCell"/>
</dbReference>
<dbReference type="GO" id="GO:0004139">
    <property type="term" value="F:deoxyribose-phosphate aldolase activity"/>
    <property type="evidence" value="ECO:0007669"/>
    <property type="project" value="UniProtKB-UniRule"/>
</dbReference>
<dbReference type="GO" id="GO:0006018">
    <property type="term" value="P:2-deoxyribose 1-phosphate catabolic process"/>
    <property type="evidence" value="ECO:0007669"/>
    <property type="project" value="UniProtKB-UniRule"/>
</dbReference>
<dbReference type="GO" id="GO:0016052">
    <property type="term" value="P:carbohydrate catabolic process"/>
    <property type="evidence" value="ECO:0007669"/>
    <property type="project" value="TreeGrafter"/>
</dbReference>
<dbReference type="GO" id="GO:0009264">
    <property type="term" value="P:deoxyribonucleotide catabolic process"/>
    <property type="evidence" value="ECO:0007669"/>
    <property type="project" value="InterPro"/>
</dbReference>
<dbReference type="CDD" id="cd00959">
    <property type="entry name" value="DeoC"/>
    <property type="match status" value="1"/>
</dbReference>
<dbReference type="FunFam" id="3.20.20.70:FF:000044">
    <property type="entry name" value="Deoxyribose-phosphate aldolase"/>
    <property type="match status" value="1"/>
</dbReference>
<dbReference type="Gene3D" id="3.20.20.70">
    <property type="entry name" value="Aldolase class I"/>
    <property type="match status" value="1"/>
</dbReference>
<dbReference type="HAMAP" id="MF_00114">
    <property type="entry name" value="DeoC_type1"/>
    <property type="match status" value="1"/>
</dbReference>
<dbReference type="InterPro" id="IPR013785">
    <property type="entry name" value="Aldolase_TIM"/>
</dbReference>
<dbReference type="InterPro" id="IPR011343">
    <property type="entry name" value="DeoC"/>
</dbReference>
<dbReference type="InterPro" id="IPR002915">
    <property type="entry name" value="DeoC/FbaB/LacD_aldolase"/>
</dbReference>
<dbReference type="InterPro" id="IPR028581">
    <property type="entry name" value="DeoC_typeI"/>
</dbReference>
<dbReference type="NCBIfam" id="TIGR00126">
    <property type="entry name" value="deoC"/>
    <property type="match status" value="1"/>
</dbReference>
<dbReference type="PANTHER" id="PTHR10889">
    <property type="entry name" value="DEOXYRIBOSE-PHOSPHATE ALDOLASE"/>
    <property type="match status" value="1"/>
</dbReference>
<dbReference type="PANTHER" id="PTHR10889:SF1">
    <property type="entry name" value="DEOXYRIBOSE-PHOSPHATE ALDOLASE"/>
    <property type="match status" value="1"/>
</dbReference>
<dbReference type="Pfam" id="PF01791">
    <property type="entry name" value="DeoC"/>
    <property type="match status" value="1"/>
</dbReference>
<dbReference type="PIRSF" id="PIRSF001357">
    <property type="entry name" value="DeoC"/>
    <property type="match status" value="1"/>
</dbReference>
<dbReference type="SMART" id="SM01133">
    <property type="entry name" value="DeoC"/>
    <property type="match status" value="1"/>
</dbReference>
<dbReference type="SUPFAM" id="SSF51569">
    <property type="entry name" value="Aldolase"/>
    <property type="match status" value="1"/>
</dbReference>
<name>DEOC_CLOBA</name>
<proteinExistence type="inferred from homology"/>
<comment type="function">
    <text evidence="1">Catalyzes a reversible aldol reaction between acetaldehyde and D-glyceraldehyde 3-phosphate to generate 2-deoxy-D-ribose 5-phosphate.</text>
</comment>
<comment type="catalytic activity">
    <reaction evidence="1">
        <text>2-deoxy-D-ribose 5-phosphate = D-glyceraldehyde 3-phosphate + acetaldehyde</text>
        <dbReference type="Rhea" id="RHEA:12821"/>
        <dbReference type="ChEBI" id="CHEBI:15343"/>
        <dbReference type="ChEBI" id="CHEBI:59776"/>
        <dbReference type="ChEBI" id="CHEBI:62877"/>
        <dbReference type="EC" id="4.1.2.4"/>
    </reaction>
</comment>
<comment type="pathway">
    <text evidence="1">Carbohydrate degradation; 2-deoxy-D-ribose 1-phosphate degradation; D-glyceraldehyde 3-phosphate and acetaldehyde from 2-deoxy-alpha-D-ribose 1-phosphate: step 2/2.</text>
</comment>
<comment type="subcellular location">
    <subcellularLocation>
        <location evidence="1">Cytoplasm</location>
    </subcellularLocation>
</comment>
<comment type="similarity">
    <text evidence="1">Belongs to the DeoC/FbaB aldolase family. DeoC type 1 subfamily.</text>
</comment>
<feature type="chain" id="PRO_1000094839" description="Deoxyribose-phosphate aldolase">
    <location>
        <begin position="1"/>
        <end position="221"/>
    </location>
</feature>
<feature type="active site" description="Proton donor/acceptor" evidence="1">
    <location>
        <position position="91"/>
    </location>
</feature>
<feature type="active site" description="Schiff-base intermediate with acetaldehyde" evidence="1">
    <location>
        <position position="153"/>
    </location>
</feature>
<feature type="active site" description="Proton donor/acceptor" evidence="1">
    <location>
        <position position="182"/>
    </location>
</feature>
<reference key="1">
    <citation type="submission" date="2008-05" db="EMBL/GenBank/DDBJ databases">
        <title>Complete genome sequence of Clostridium botulinum E3 str. Alaska E43.</title>
        <authorList>
            <person name="Brinkac L.M."/>
            <person name="Brown J.L."/>
            <person name="Bruce D."/>
            <person name="Detter C."/>
            <person name="Munk C."/>
            <person name="Smith L.A."/>
            <person name="Smith T.J."/>
            <person name="Sutton G."/>
            <person name="Brettin T.S."/>
        </authorList>
    </citation>
    <scope>NUCLEOTIDE SEQUENCE [LARGE SCALE GENOMIC DNA]</scope>
    <source>
        <strain>Alaska E43 / Type E3</strain>
    </source>
</reference>
<protein>
    <recommendedName>
        <fullName evidence="1">Deoxyribose-phosphate aldolase</fullName>
        <shortName evidence="1">DERA</shortName>
        <ecNumber evidence="1">4.1.2.4</ecNumber>
    </recommendedName>
    <alternativeName>
        <fullName evidence="1">2-deoxy-D-ribose 5-phosphate aldolase</fullName>
    </alternativeName>
    <alternativeName>
        <fullName evidence="1">Phosphodeoxyriboaldolase</fullName>
        <shortName evidence="1">Deoxyriboaldolase</shortName>
    </alternativeName>
</protein>